<organism>
    <name type="scientific">Shewanella baltica (strain OS223)</name>
    <dbReference type="NCBI Taxonomy" id="407976"/>
    <lineage>
        <taxon>Bacteria</taxon>
        <taxon>Pseudomonadati</taxon>
        <taxon>Pseudomonadota</taxon>
        <taxon>Gammaproteobacteria</taxon>
        <taxon>Alteromonadales</taxon>
        <taxon>Shewanellaceae</taxon>
        <taxon>Shewanella</taxon>
    </lineage>
</organism>
<sequence length="92" mass="10840">MARTVNCVYLNKEADGLDFQLYPGDLGKRIFDNISKEAWGLWQKKQTMLINEKKLNMMNVDDRKFLEEQMTSFLFEGKEVEIEGFVPEKDQD</sequence>
<protein>
    <recommendedName>
        <fullName evidence="1">Probable Fe(2+)-trafficking protein</fullName>
    </recommendedName>
</protein>
<evidence type="ECO:0000255" key="1">
    <source>
        <dbReference type="HAMAP-Rule" id="MF_00686"/>
    </source>
</evidence>
<accession>B8E916</accession>
<feature type="chain" id="PRO_1000147770" description="Probable Fe(2+)-trafficking protein">
    <location>
        <begin position="1"/>
        <end position="92"/>
    </location>
</feature>
<keyword id="KW-0408">Iron</keyword>
<reference key="1">
    <citation type="submission" date="2008-12" db="EMBL/GenBank/DDBJ databases">
        <title>Complete sequence of chromosome of Shewanella baltica OS223.</title>
        <authorList>
            <consortium name="US DOE Joint Genome Institute"/>
            <person name="Lucas S."/>
            <person name="Copeland A."/>
            <person name="Lapidus A."/>
            <person name="Glavina del Rio T."/>
            <person name="Dalin E."/>
            <person name="Tice H."/>
            <person name="Bruce D."/>
            <person name="Goodwin L."/>
            <person name="Pitluck S."/>
            <person name="Chertkov O."/>
            <person name="Meincke L."/>
            <person name="Brettin T."/>
            <person name="Detter J.C."/>
            <person name="Han C."/>
            <person name="Kuske C.R."/>
            <person name="Larimer F."/>
            <person name="Land M."/>
            <person name="Hauser L."/>
            <person name="Kyrpides N."/>
            <person name="Ovchinnikova G."/>
            <person name="Brettar I."/>
            <person name="Rodrigues J."/>
            <person name="Konstantinidis K."/>
            <person name="Tiedje J."/>
        </authorList>
    </citation>
    <scope>NUCLEOTIDE SEQUENCE [LARGE SCALE GENOMIC DNA]</scope>
    <source>
        <strain>OS223</strain>
    </source>
</reference>
<proteinExistence type="inferred from homology"/>
<name>FETP_SHEB2</name>
<comment type="function">
    <text evidence="1">Could be a mediator in iron transactions between iron acquisition and iron-requiring processes, such as synthesis and/or repair of Fe-S clusters in biosynthetic enzymes.</text>
</comment>
<comment type="similarity">
    <text evidence="1">Belongs to the Fe(2+)-trafficking protein family.</text>
</comment>
<gene>
    <name type="ordered locus">Sbal223_1324</name>
</gene>
<dbReference type="EMBL" id="CP001252">
    <property type="protein sequence ID" value="ACK45832.1"/>
    <property type="molecule type" value="Genomic_DNA"/>
</dbReference>
<dbReference type="RefSeq" id="WP_006082532.1">
    <property type="nucleotide sequence ID" value="NC_011663.1"/>
</dbReference>
<dbReference type="SMR" id="B8E916"/>
<dbReference type="KEGG" id="sbp:Sbal223_1324"/>
<dbReference type="HOGENOM" id="CLU_170994_0_0_6"/>
<dbReference type="Proteomes" id="UP000002507">
    <property type="component" value="Chromosome"/>
</dbReference>
<dbReference type="GO" id="GO:0005829">
    <property type="term" value="C:cytosol"/>
    <property type="evidence" value="ECO:0007669"/>
    <property type="project" value="TreeGrafter"/>
</dbReference>
<dbReference type="GO" id="GO:0005506">
    <property type="term" value="F:iron ion binding"/>
    <property type="evidence" value="ECO:0007669"/>
    <property type="project" value="UniProtKB-UniRule"/>
</dbReference>
<dbReference type="GO" id="GO:0034599">
    <property type="term" value="P:cellular response to oxidative stress"/>
    <property type="evidence" value="ECO:0007669"/>
    <property type="project" value="TreeGrafter"/>
</dbReference>
<dbReference type="FunFam" id="1.10.3880.10:FF:000001">
    <property type="entry name" value="Probable Fe(2+)-trafficking protein"/>
    <property type="match status" value="1"/>
</dbReference>
<dbReference type="Gene3D" id="1.10.3880.10">
    <property type="entry name" value="Fe(II) trafficking protein YggX"/>
    <property type="match status" value="1"/>
</dbReference>
<dbReference type="HAMAP" id="MF_00686">
    <property type="entry name" value="Fe_traffic_YggX"/>
    <property type="match status" value="1"/>
</dbReference>
<dbReference type="InterPro" id="IPR007457">
    <property type="entry name" value="Fe_traffick_prot_YggX"/>
</dbReference>
<dbReference type="InterPro" id="IPR036766">
    <property type="entry name" value="Fe_traffick_prot_YggX_sf"/>
</dbReference>
<dbReference type="NCBIfam" id="NF003817">
    <property type="entry name" value="PRK05408.1"/>
    <property type="match status" value="1"/>
</dbReference>
<dbReference type="PANTHER" id="PTHR36965">
    <property type="entry name" value="FE(2+)-TRAFFICKING PROTEIN-RELATED"/>
    <property type="match status" value="1"/>
</dbReference>
<dbReference type="PANTHER" id="PTHR36965:SF1">
    <property type="entry name" value="FE(2+)-TRAFFICKING PROTEIN-RELATED"/>
    <property type="match status" value="1"/>
</dbReference>
<dbReference type="Pfam" id="PF04362">
    <property type="entry name" value="Iron_traffic"/>
    <property type="match status" value="1"/>
</dbReference>
<dbReference type="PIRSF" id="PIRSF029827">
    <property type="entry name" value="Fe_traffic_YggX"/>
    <property type="match status" value="1"/>
</dbReference>
<dbReference type="SUPFAM" id="SSF111148">
    <property type="entry name" value="YggX-like"/>
    <property type="match status" value="1"/>
</dbReference>